<comment type="function">
    <text evidence="1">Endonuclease that specifically degrades the RNA of RNA-DNA hybrids.</text>
</comment>
<comment type="catalytic activity">
    <reaction evidence="1">
        <text>Endonucleolytic cleavage to 5'-phosphomonoester.</text>
        <dbReference type="EC" id="3.1.26.4"/>
    </reaction>
</comment>
<comment type="cofactor">
    <cofactor evidence="1">
        <name>Mg(2+)</name>
        <dbReference type="ChEBI" id="CHEBI:18420"/>
    </cofactor>
    <text evidence="1">Binds 1 Mg(2+) ion per subunit. May bind a second metal ion at a regulatory site, or after substrate binding.</text>
</comment>
<comment type="subunit">
    <text evidence="1">Monomer.</text>
</comment>
<comment type="subcellular location">
    <subcellularLocation>
        <location evidence="1">Cytoplasm</location>
    </subcellularLocation>
</comment>
<comment type="similarity">
    <text evidence="1">Belongs to the RNase H family.</text>
</comment>
<organism>
    <name type="scientific">Treponema pallidum subsp. pallidum (strain SS14)</name>
    <dbReference type="NCBI Taxonomy" id="455434"/>
    <lineage>
        <taxon>Bacteria</taxon>
        <taxon>Pseudomonadati</taxon>
        <taxon>Spirochaetota</taxon>
        <taxon>Spirochaetia</taxon>
        <taxon>Spirochaetales</taxon>
        <taxon>Treponemataceae</taxon>
        <taxon>Treponema</taxon>
    </lineage>
</organism>
<name>RNH_TREPS</name>
<protein>
    <recommendedName>
        <fullName evidence="1">Ribonuclease H</fullName>
        <shortName evidence="1">RNase H</shortName>
        <ecNumber evidence="1">3.1.26.4</ecNumber>
    </recommendedName>
</protein>
<feature type="chain" id="PRO_1000090923" description="Ribonuclease H">
    <location>
        <begin position="1"/>
        <end position="169"/>
    </location>
</feature>
<feature type="domain" description="RNase H type-1" evidence="2">
    <location>
        <begin position="3"/>
        <end position="159"/>
    </location>
</feature>
<feature type="binding site" evidence="1">
    <location>
        <position position="12"/>
    </location>
    <ligand>
        <name>Mg(2+)</name>
        <dbReference type="ChEBI" id="CHEBI:18420"/>
        <label>1</label>
    </ligand>
</feature>
<feature type="binding site" evidence="1">
    <location>
        <position position="12"/>
    </location>
    <ligand>
        <name>Mg(2+)</name>
        <dbReference type="ChEBI" id="CHEBI:18420"/>
        <label>2</label>
    </ligand>
</feature>
<feature type="binding site" evidence="1">
    <location>
        <position position="63"/>
    </location>
    <ligand>
        <name>Mg(2+)</name>
        <dbReference type="ChEBI" id="CHEBI:18420"/>
        <label>1</label>
    </ligand>
</feature>
<feature type="binding site" evidence="1">
    <location>
        <position position="87"/>
    </location>
    <ligand>
        <name>Mg(2+)</name>
        <dbReference type="ChEBI" id="CHEBI:18420"/>
        <label>1</label>
    </ligand>
</feature>
<feature type="binding site" evidence="1">
    <location>
        <position position="151"/>
    </location>
    <ligand>
        <name>Mg(2+)</name>
        <dbReference type="ChEBI" id="CHEBI:18420"/>
        <label>2</label>
    </ligand>
</feature>
<sequence>MNAHAALTLYTDGACLGNPGPGGWAFALVPSDVPFLETGQXAPEAAAFTRSGSAYPSTNNRMELCAVINALQEAHGRAAEAVVVVTDSQYVRKGITQWIHTWKHNGWKTAAKQPVKNKDLWEALSALADALSVEWRWVKGHAGDPYNELCDRLATDAARRAAQSTADCP</sequence>
<gene>
    <name evidence="1" type="primary">rnhA</name>
    <name type="ordered locus">TPASS_0353</name>
</gene>
<reference key="1">
    <citation type="journal article" date="2008" name="BMC Microbiol.">
        <title>Complete genome sequence of Treponema pallidum ssp. pallidum strain SS14 determined with oligonucleotide arrays.</title>
        <authorList>
            <person name="Matejkova P."/>
            <person name="Strouhal M."/>
            <person name="Smajs D."/>
            <person name="Norris S.J."/>
            <person name="Palzkill T."/>
            <person name="Petrosino J.F."/>
            <person name="Sodergren E."/>
            <person name="Norton J.E."/>
            <person name="Singh J."/>
            <person name="Richmond T.A."/>
            <person name="Molla M.N."/>
            <person name="Albert T.J."/>
            <person name="Weinstock G.M."/>
        </authorList>
    </citation>
    <scope>NUCLEOTIDE SEQUENCE [LARGE SCALE GENOMIC DNA]</scope>
    <source>
        <strain>SS14</strain>
    </source>
</reference>
<accession>B2S2V0</accession>
<proteinExistence type="inferred from homology"/>
<evidence type="ECO:0000255" key="1">
    <source>
        <dbReference type="HAMAP-Rule" id="MF_00042"/>
    </source>
</evidence>
<evidence type="ECO:0000255" key="2">
    <source>
        <dbReference type="PROSITE-ProRule" id="PRU00408"/>
    </source>
</evidence>
<dbReference type="EC" id="3.1.26.4" evidence="1"/>
<dbReference type="EMBL" id="CP000805">
    <property type="protein sequence ID" value="ACD70779.1"/>
    <property type="molecule type" value="Genomic_DNA"/>
</dbReference>
<dbReference type="RefSeq" id="WP_010881801.1">
    <property type="nucleotide sequence ID" value="NC_010741.1"/>
</dbReference>
<dbReference type="KEGG" id="tpp:TPASS_0353"/>
<dbReference type="PATRIC" id="fig|243276.5.peg.370"/>
<dbReference type="Proteomes" id="UP000001202">
    <property type="component" value="Chromosome"/>
</dbReference>
<dbReference type="GO" id="GO:0005737">
    <property type="term" value="C:cytoplasm"/>
    <property type="evidence" value="ECO:0007669"/>
    <property type="project" value="UniProtKB-SubCell"/>
</dbReference>
<dbReference type="GO" id="GO:0000287">
    <property type="term" value="F:magnesium ion binding"/>
    <property type="evidence" value="ECO:0007669"/>
    <property type="project" value="UniProtKB-UniRule"/>
</dbReference>
<dbReference type="GO" id="GO:0003676">
    <property type="term" value="F:nucleic acid binding"/>
    <property type="evidence" value="ECO:0007669"/>
    <property type="project" value="InterPro"/>
</dbReference>
<dbReference type="GO" id="GO:0004523">
    <property type="term" value="F:RNA-DNA hybrid ribonuclease activity"/>
    <property type="evidence" value="ECO:0007669"/>
    <property type="project" value="UniProtKB-UniRule"/>
</dbReference>
<dbReference type="GO" id="GO:0043137">
    <property type="term" value="P:DNA replication, removal of RNA primer"/>
    <property type="evidence" value="ECO:0007669"/>
    <property type="project" value="TreeGrafter"/>
</dbReference>
<dbReference type="CDD" id="cd09278">
    <property type="entry name" value="RNase_HI_prokaryote_like"/>
    <property type="match status" value="1"/>
</dbReference>
<dbReference type="Gene3D" id="3.30.420.10">
    <property type="entry name" value="Ribonuclease H-like superfamily/Ribonuclease H"/>
    <property type="match status" value="1"/>
</dbReference>
<dbReference type="HAMAP" id="MF_00042">
    <property type="entry name" value="RNase_H"/>
    <property type="match status" value="1"/>
</dbReference>
<dbReference type="InterPro" id="IPR050092">
    <property type="entry name" value="RNase_H"/>
</dbReference>
<dbReference type="InterPro" id="IPR012337">
    <property type="entry name" value="RNaseH-like_sf"/>
</dbReference>
<dbReference type="InterPro" id="IPR002156">
    <property type="entry name" value="RNaseH_domain"/>
</dbReference>
<dbReference type="InterPro" id="IPR036397">
    <property type="entry name" value="RNaseH_sf"/>
</dbReference>
<dbReference type="InterPro" id="IPR022892">
    <property type="entry name" value="RNaseHI"/>
</dbReference>
<dbReference type="NCBIfam" id="NF001236">
    <property type="entry name" value="PRK00203.1"/>
    <property type="match status" value="1"/>
</dbReference>
<dbReference type="PANTHER" id="PTHR10642">
    <property type="entry name" value="RIBONUCLEASE H1"/>
    <property type="match status" value="1"/>
</dbReference>
<dbReference type="PANTHER" id="PTHR10642:SF26">
    <property type="entry name" value="RIBONUCLEASE H1"/>
    <property type="match status" value="1"/>
</dbReference>
<dbReference type="Pfam" id="PF00075">
    <property type="entry name" value="RNase_H"/>
    <property type="match status" value="1"/>
</dbReference>
<dbReference type="SUPFAM" id="SSF53098">
    <property type="entry name" value="Ribonuclease H-like"/>
    <property type="match status" value="1"/>
</dbReference>
<dbReference type="PROSITE" id="PS50879">
    <property type="entry name" value="RNASE_H_1"/>
    <property type="match status" value="1"/>
</dbReference>
<keyword id="KW-0963">Cytoplasm</keyword>
<keyword id="KW-0255">Endonuclease</keyword>
<keyword id="KW-0378">Hydrolase</keyword>
<keyword id="KW-0460">Magnesium</keyword>
<keyword id="KW-0479">Metal-binding</keyword>
<keyword id="KW-0540">Nuclease</keyword>